<sequence length="14" mass="1453">PSSQPRGDPTGPKE</sequence>
<protein>
    <recommendedName>
        <fullName>Protein Tat</fullName>
    </recommendedName>
    <alternativeName>
        <fullName>Transactivating regulatory protein</fullName>
    </alternativeName>
</protein>
<organism>
    <name type="scientific">Human immunodeficiency virus type 1 group M subtype D (isolate Z84)</name>
    <name type="common">HIV-1</name>
    <dbReference type="NCBI Taxonomy" id="11681"/>
    <lineage>
        <taxon>Viruses</taxon>
        <taxon>Riboviria</taxon>
        <taxon>Pararnavirae</taxon>
        <taxon>Artverviricota</taxon>
        <taxon>Revtraviricetes</taxon>
        <taxon>Ortervirales</taxon>
        <taxon>Retroviridae</taxon>
        <taxon>Orthoretrovirinae</taxon>
        <taxon>Lentivirus</taxon>
        <taxon>Human immunodeficiency virus type 1</taxon>
    </lineage>
</organism>
<comment type="function">
    <text evidence="2">Transcriptional activator that increases RNA Pol II processivity, thereby increasing the level of full-length viral transcripts. Recognizes a hairpin structure at the 5'-LTR of the nascent viral mRNAs referred to as the transactivation responsive RNA element (TAR) and recruits the cyclin T1-CDK9 complex (P-TEFb complex) that will in turn hyperphosphorylate the RNA polymerase II to allow efficient elongation. The CDK9 component of P-TEFb and other Tat-activated kinases hyperphosphorylate the C-terminus of RNA Pol II that becomes stabilized and much more processive. Other factors such as HTATSF1/Tat-SF1, SUPT5H/SPT5, and HTATIP2 are also important for Tat's function. Besides its effect on RNA Pol II processivity, Tat induces chromatin remodeling of proviral genes by recruiting the histone acetyltransferases (HATs) CREBBP, EP300 and PCAF to the chromatin. This also contributes to the increase in proviral transcription rate, especially when the provirus integrates in transcriptionally silent region of the host genome. To ensure maximal activation of the LTR, Tat mediates nuclear translocation of NF-kappa-B by interacting with host RELA. Through its interaction with host TBP, Tat may also modulate transcription initiation. Tat can reactivate a latently infected cell by penetrating in it and transactivating its LTR promoter. In the cytoplasm, Tat is thought to act as a translational activator of HIV-1 mRNAs.</text>
</comment>
<comment type="function">
    <text evidence="1">Extracellular circulating Tat can be endocytosed by surrounding uninfected cells via the binding to several surface receptors such as CD26, CXCR4, heparan sulfate proteoglycans (HSPG) or LDLR. Neurons are rarely infected, but they internalize Tat via their LDLR. Endosomal low pH allows Tat to cross the endosome membrane to enter the cytosol and eventually further translocate into the nucleus, thereby inducing severe cell dysfunctions ranging from cell activation to cell death. Through its interaction with nuclear HATs, Tat is potentially able to control the acetylation-dependent cellular gene expression. Tat seems to inhibit the HAT activity of KAT5/Tip60 and TAF1, and consequently modify the expression of specific cellular genes. Modulates the expression of many cellular genes involved in cell survival, proliferation or in coding for cytokines (such as IL10) or cytokine receptors. May be involved in the derepression of host interleukin IL2 expression. Mediates the activation of cyclin-dependent kinases and dysregulation of microtubule network. Tat plays a role in T-cell and neurons apoptosis. Tat induced neurotoxicity and apoptosis probably contribute to neuroAIDS. Host extracellular matrix metalloproteinase MMP1 cleaves Tat and decreases Tat's mediated neurotoxicity. Circulating Tat also acts as a chemokine-like and/or growth factor-like molecule that binds to specific receptors on the surface of the cells, affecting many cellular pathways. In the vascular system, Tat binds to ITGAV/ITGB3 and ITGA5/ITGB1 integrins dimers at the surface of endothelial cells and competes with bFGF for heparin-binding sites, leading to an excess of soluble bFGF. Binds to KDR/VEGFR-2. All these Tat-mediated effects enhance angiogenesis in Kaposi's sarcoma lesions (By similarity).</text>
</comment>
<comment type="subunit">
    <text evidence="1">Interacts with host CCNT1. Associates with the P-TEFb complex composed at least of Tat, P-TEFb (CDK9 and CCNT1), TAR RNA, RNA Pol II. Recruits the HATs CREBBP, TAF1/TFIID, EP300, PCAF and GCN5L2. Interacts with host KAT5/Tip60; this interaction targets the latter to degradation. Interacts with the host deacetylase SIRT1. Interacts with host capping enzyme RNGTT; this interaction stimulates RNGTT. Binds to host KDR, and to the host integrins ITGAV/ITGB3 and ITGA5/ITGB1. Interacts with host KPNB1/importin beta-1 without previous binding to KPNA1/importin alpha-1. Interacts with EIF2AK2. Interacts with host nucleosome assembly protein NAP1L1; this interaction may be required for the transport of Tat within the nucleus, since the two proteins interact at the nuclear rim. Interacts with host C1QBP/SF2P32; this interaction involves lysine-acetylated Tat. Interacts with the host chemokine receptors CCR2, CCR3 and CXCR4. Interacts with host DPP4/CD26; this interaction may trigger an anti-proliferative effect. Interacts with host LDLR. Interacts with the host extracellular matrix metalloproteinase MMP1. Interacts with host PRMT6; this interaction mediates Tat's methylation. Interacts with, and is ubiquitinated by MDM2/Hdm2. Interacts with host PSMC3 and HTATIP2. Interacts with STAB1; this interaction may overcome SATB1-mediated repression of IL2 and IL2RA (interleukin) in T cells by binding to the same domain than HDAC1. Interacts (when acetylated) with human CDK13, thereby increasing HIV-1 mRNA splicing and promoting the production of the doubly spliced HIV-1 protein Nef (By similarity).</text>
</comment>
<comment type="subcellular location">
    <subcellularLocation>
        <location>Host nucleus</location>
        <location>Host nucleolus</location>
    </subcellularLocation>
    <subcellularLocation>
        <location>Host cytoplasm</location>
    </subcellularLocation>
    <subcellularLocation>
        <location>Secreted</location>
    </subcellularLocation>
    <text evidence="1">Probably localizes to both nuclear and nucleolar compartments. Nuclear localization is mediated through the interaction of the nuclear localization signal with importin KPNB1. Secretion occurs through a Golgi-independent pathway. Tat is released from infected cells to the extracellular space where it remains associated to the cell membrane, or is secreted into the cerebrospinal fluid and sera. Extracellular Tat can be endocytosed by surrounding uninfected cells via binding to several receptors depending on the cell type (By similarity).</text>
</comment>
<comment type="alternative products">
    <event type="alternative splicing"/>
    <isoform>
        <id>P12511-1</id>
        <name>Long</name>
        <sequence type="displayed"/>
    </isoform>
    <isoform>
        <id>P12511-2</id>
        <name>Short</name>
        <sequence type="not described"/>
    </isoform>
</comment>
<comment type="domain">
    <text evidence="1">The transactivation domain mediates the interaction with CCNT1, GCN5L2, and MDM2.</text>
</comment>
<comment type="domain">
    <text evidence="1">The Arg-rich RNA-binding region binds the TAR RNA. This region also mediates the nuclear localization through direct binding to KPNB1 and is involved in Tat's transfer across cell membranes (protein transduction). The same region is required for the interaction with EP300, PCAF, EIF2AK2 and KDR (By similarity).</text>
</comment>
<comment type="domain">
    <text evidence="1 4">The Cys-rich region may bind 2 zinc ions (Potential). This region is involved in binding to KAT5 (By similarity).</text>
</comment>
<comment type="domain">
    <text evidence="1">The cell attachment site mediates the interaction with ITGAV/ITGB3 and ITGA5/ITGB1 integrins, leading to vascular cell migration and invasion. This interaction also provides endothelial cells with the adhesion signal they require to grow in response to mitogens (By similarity).</text>
</comment>
<comment type="PTM">
    <text evidence="1">Acetylation by EP300, CREBBP, GCN5L2/GCN5 and PCAF regulates the transactivation activity of Tat. EP300-mediated acetylation of Lys-50 promotes dissociation of Tat from the TAR RNA through the competitive binding to PCAF's bromodomain. In addition, the non-acetylated Tat's N-terminus can also interact with PCAF. PCAF-mediated acetylation of Lys-28 enhances Tat's binding to CCNT1. Lys-50 is deacetylated by SIRT1 (By similarity).</text>
</comment>
<comment type="PTM">
    <text evidence="1">Phosphorylated by EIF2AK2 on serine and threonine residues adjacent to the basic region important for TAR RNA binding and function. Phosphorylation of Tat by EIF2AK2 is dependent on the prior activation of EIF2AK2 by dsRNA (By similarity).</text>
</comment>
<comment type="PTM">
    <text evidence="1">Asymmetrical arginine methylation by host PRMT6 seems to diminish the transactivation capacity of Tat and affects the interaction with host CCNT1.</text>
</comment>
<comment type="PTM">
    <text evidence="1">Polyubiquitination by MDM2 does not target Tat to degradation, but activates its transactivation function and fosters interaction with CCNT1 and TAR RNA.</text>
</comment>
<comment type="miscellaneous">
    <text>The Z-84 isolate was taken from a 54 year-old Zairean male.</text>
</comment>
<comment type="miscellaneous">
    <text>HIV-1 lineages are divided in three main groups, M (for Major), O (for Outlier), and N (for New, or Non-M, Non-O). The vast majority of strains found worldwide belong to the group M. Group O seems to be endemic to and largely confined to Cameroon and neighboring countries in West Central Africa, where these viruses represent a small minority of HIV-1 strains. The group N is represented by a limited number of isolates from Cameroonian persons. The group M is further subdivided in 9 clades or subtypes (A to D, F to H, J and K).</text>
</comment>
<comment type="miscellaneous">
    <molecule>Isoform Short</molecule>
    <text evidence="4">Expressed in the late stage of the infection cycle, when unspliced viral RNAs are exported to the cytoplasm by the viral Rev protein.</text>
</comment>
<comment type="similarity">
    <text evidence="4">Belongs to the lentiviruses Tat family.</text>
</comment>
<keyword id="KW-0007">Acetylation</keyword>
<keyword id="KW-0010">Activator</keyword>
<keyword id="KW-0014">AIDS</keyword>
<keyword id="KW-0025">Alternative splicing</keyword>
<keyword id="KW-0053">Apoptosis</keyword>
<keyword id="KW-1035">Host cytoplasm</keyword>
<keyword id="KW-1048">Host nucleus</keyword>
<keyword id="KW-0945">Host-virus interaction</keyword>
<keyword id="KW-0479">Metal-binding</keyword>
<keyword id="KW-0488">Methylation</keyword>
<keyword id="KW-0597">Phosphoprotein</keyword>
<keyword id="KW-0694">RNA-binding</keyword>
<keyword id="KW-0964">Secreted</keyword>
<keyword id="KW-0804">Transcription</keyword>
<keyword id="KW-0805">Transcription regulation</keyword>
<keyword id="KW-0832">Ubl conjugation</keyword>
<keyword id="KW-0862">Zinc</keyword>
<accession>P12511</accession>
<feature type="chain" id="PRO_0000085342" description="Protein Tat">
    <location>
        <begin position="1" status="less than"/>
        <end position="14"/>
    </location>
</feature>
<feature type="short sequence motif" description="Cell attachment site" evidence="3">
    <location>
        <begin position="6"/>
        <end position="8"/>
    </location>
</feature>
<feature type="non-terminal residue">
    <location>
        <position position="1"/>
    </location>
</feature>
<evidence type="ECO:0000250" key="1"/>
<evidence type="ECO:0000250" key="2">
    <source>
        <dbReference type="UniProtKB" id="P04608"/>
    </source>
</evidence>
<evidence type="ECO:0000255" key="3"/>
<evidence type="ECO:0000305" key="4"/>
<reference key="1">
    <citation type="journal article" date="1988" name="AIDS Res. Hum. Retroviruses">
        <title>Nucleotide sequence analysis of the env gene of a new Zairian isolate of HIV-1.</title>
        <authorList>
            <person name="Yourno J."/>
            <person name="Josephs S.F."/>
            <person name="Reitz M.S. Jr."/>
            <person name="Zagury D."/>
            <person name="Wong-Staal F."/>
            <person name="Gallo R.C."/>
        </authorList>
    </citation>
    <scope>NUCLEOTIDE SEQUENCE [GENOMIC RNA]</scope>
</reference>
<reference key="2">
    <citation type="journal article" date="2005" name="Microbes Infect.">
        <title>Decoding Tat: the biology of HIV Tat posttranslational modifications.</title>
        <authorList>
            <person name="Hetzer C."/>
            <person name="Dormeyer W."/>
            <person name="Schnolzer M."/>
            <person name="Ott M."/>
        </authorList>
    </citation>
    <scope>REVIEW</scope>
    <scope>ALTERNATIVE SPLICING</scope>
</reference>
<reference key="3">
    <citation type="journal article" date="2006" name="Front. Biosci.">
        <title>The multiple functions of HIV-1 Tat: proliferation versus apoptosis.</title>
        <authorList>
            <person name="Peruzzi F."/>
        </authorList>
    </citation>
    <scope>REVIEW</scope>
</reference>
<reference key="4">
    <citation type="journal article" date="2006" name="Microbes Infect.">
        <title>HIV tat and neurotoxicity.</title>
        <authorList>
            <person name="King J.E."/>
            <person name="Eugenin E.A."/>
            <person name="Buckner C.M."/>
            <person name="Berman J.W."/>
        </authorList>
    </citation>
    <scope>REVIEW</scope>
</reference>
<proteinExistence type="inferred from homology"/>
<name>TAT_HV1Z8</name>
<dbReference type="EMBL" id="J03653">
    <property type="protein sequence ID" value="AAA44685.1"/>
    <property type="molecule type" value="Genomic_RNA"/>
</dbReference>
<dbReference type="GO" id="GO:0005576">
    <property type="term" value="C:extracellular region"/>
    <property type="evidence" value="ECO:0007669"/>
    <property type="project" value="UniProtKB-SubCell"/>
</dbReference>
<dbReference type="GO" id="GO:0030430">
    <property type="term" value="C:host cell cytoplasm"/>
    <property type="evidence" value="ECO:0007669"/>
    <property type="project" value="UniProtKB-SubCell"/>
</dbReference>
<dbReference type="GO" id="GO:0044196">
    <property type="term" value="C:host cell nucleolus"/>
    <property type="evidence" value="ECO:0007669"/>
    <property type="project" value="UniProtKB-SubCell"/>
</dbReference>
<dbReference type="GO" id="GO:0046872">
    <property type="term" value="F:metal ion binding"/>
    <property type="evidence" value="ECO:0007669"/>
    <property type="project" value="UniProtKB-KW"/>
</dbReference>
<dbReference type="GO" id="GO:0003723">
    <property type="term" value="F:RNA binding"/>
    <property type="evidence" value="ECO:0007669"/>
    <property type="project" value="UniProtKB-KW"/>
</dbReference>
<organismHost>
    <name type="scientific">Homo sapiens</name>
    <name type="common">Human</name>
    <dbReference type="NCBI Taxonomy" id="9606"/>
</organismHost>